<comment type="function">
    <text evidence="1">Catalyzes a salvage reaction resulting in the formation of AMP, that is energically less costly than de novo synthesis.</text>
</comment>
<comment type="catalytic activity">
    <reaction evidence="1">
        <text>AMP + diphosphate = 5-phospho-alpha-D-ribose 1-diphosphate + adenine</text>
        <dbReference type="Rhea" id="RHEA:16609"/>
        <dbReference type="ChEBI" id="CHEBI:16708"/>
        <dbReference type="ChEBI" id="CHEBI:33019"/>
        <dbReference type="ChEBI" id="CHEBI:58017"/>
        <dbReference type="ChEBI" id="CHEBI:456215"/>
        <dbReference type="EC" id="2.4.2.7"/>
    </reaction>
</comment>
<comment type="pathway">
    <text evidence="1">Purine metabolism; AMP biosynthesis via salvage pathway; AMP from adenine: step 1/1.</text>
</comment>
<comment type="subunit">
    <text evidence="1">Homodimer.</text>
</comment>
<comment type="subcellular location">
    <subcellularLocation>
        <location evidence="1">Cytoplasm</location>
    </subcellularLocation>
</comment>
<comment type="similarity">
    <text evidence="1">Belongs to the purine/pyrimidine phosphoribosyltransferase family.</text>
</comment>
<keyword id="KW-0963">Cytoplasm</keyword>
<keyword id="KW-0328">Glycosyltransferase</keyword>
<keyword id="KW-0660">Purine salvage</keyword>
<keyword id="KW-1185">Reference proteome</keyword>
<keyword id="KW-0808">Transferase</keyword>
<dbReference type="EC" id="2.4.2.7" evidence="1"/>
<dbReference type="EMBL" id="CP000115">
    <property type="protein sequence ID" value="ABA05866.1"/>
    <property type="molecule type" value="Genomic_DNA"/>
</dbReference>
<dbReference type="RefSeq" id="WP_011315816.1">
    <property type="nucleotide sequence ID" value="NC_007406.1"/>
</dbReference>
<dbReference type="SMR" id="Q3SPC5"/>
<dbReference type="STRING" id="323098.Nwi_2613"/>
<dbReference type="KEGG" id="nwi:Nwi_2613"/>
<dbReference type="eggNOG" id="COG0503">
    <property type="taxonomic scope" value="Bacteria"/>
</dbReference>
<dbReference type="HOGENOM" id="CLU_063339_3_0_5"/>
<dbReference type="OrthoDB" id="9803963at2"/>
<dbReference type="UniPathway" id="UPA00588">
    <property type="reaction ID" value="UER00646"/>
</dbReference>
<dbReference type="Proteomes" id="UP000002531">
    <property type="component" value="Chromosome"/>
</dbReference>
<dbReference type="GO" id="GO:0005737">
    <property type="term" value="C:cytoplasm"/>
    <property type="evidence" value="ECO:0007669"/>
    <property type="project" value="UniProtKB-SubCell"/>
</dbReference>
<dbReference type="GO" id="GO:0002055">
    <property type="term" value="F:adenine binding"/>
    <property type="evidence" value="ECO:0007669"/>
    <property type="project" value="TreeGrafter"/>
</dbReference>
<dbReference type="GO" id="GO:0003999">
    <property type="term" value="F:adenine phosphoribosyltransferase activity"/>
    <property type="evidence" value="ECO:0007669"/>
    <property type="project" value="UniProtKB-UniRule"/>
</dbReference>
<dbReference type="GO" id="GO:0016208">
    <property type="term" value="F:AMP binding"/>
    <property type="evidence" value="ECO:0007669"/>
    <property type="project" value="TreeGrafter"/>
</dbReference>
<dbReference type="GO" id="GO:0006168">
    <property type="term" value="P:adenine salvage"/>
    <property type="evidence" value="ECO:0007669"/>
    <property type="project" value="InterPro"/>
</dbReference>
<dbReference type="GO" id="GO:0044209">
    <property type="term" value="P:AMP salvage"/>
    <property type="evidence" value="ECO:0007669"/>
    <property type="project" value="UniProtKB-UniRule"/>
</dbReference>
<dbReference type="GO" id="GO:0006166">
    <property type="term" value="P:purine ribonucleoside salvage"/>
    <property type="evidence" value="ECO:0007669"/>
    <property type="project" value="UniProtKB-KW"/>
</dbReference>
<dbReference type="CDD" id="cd06223">
    <property type="entry name" value="PRTases_typeI"/>
    <property type="match status" value="1"/>
</dbReference>
<dbReference type="FunFam" id="3.40.50.2020:FF:000021">
    <property type="entry name" value="Adenine phosphoribosyltransferase"/>
    <property type="match status" value="1"/>
</dbReference>
<dbReference type="Gene3D" id="3.40.50.2020">
    <property type="match status" value="1"/>
</dbReference>
<dbReference type="HAMAP" id="MF_00004">
    <property type="entry name" value="Aden_phosphoribosyltr"/>
    <property type="match status" value="1"/>
</dbReference>
<dbReference type="InterPro" id="IPR005764">
    <property type="entry name" value="Ade_phspho_trans"/>
</dbReference>
<dbReference type="InterPro" id="IPR000836">
    <property type="entry name" value="PRibTrfase_dom"/>
</dbReference>
<dbReference type="InterPro" id="IPR029057">
    <property type="entry name" value="PRTase-like"/>
</dbReference>
<dbReference type="InterPro" id="IPR050054">
    <property type="entry name" value="UPRTase/APRTase"/>
</dbReference>
<dbReference type="NCBIfam" id="TIGR01090">
    <property type="entry name" value="apt"/>
    <property type="match status" value="1"/>
</dbReference>
<dbReference type="NCBIfam" id="NF002634">
    <property type="entry name" value="PRK02304.1-3"/>
    <property type="match status" value="1"/>
</dbReference>
<dbReference type="NCBIfam" id="NF002636">
    <property type="entry name" value="PRK02304.1-5"/>
    <property type="match status" value="1"/>
</dbReference>
<dbReference type="PANTHER" id="PTHR32315">
    <property type="entry name" value="ADENINE PHOSPHORIBOSYLTRANSFERASE"/>
    <property type="match status" value="1"/>
</dbReference>
<dbReference type="PANTHER" id="PTHR32315:SF3">
    <property type="entry name" value="ADENINE PHOSPHORIBOSYLTRANSFERASE"/>
    <property type="match status" value="1"/>
</dbReference>
<dbReference type="Pfam" id="PF00156">
    <property type="entry name" value="Pribosyltran"/>
    <property type="match status" value="1"/>
</dbReference>
<dbReference type="SUPFAM" id="SSF53271">
    <property type="entry name" value="PRTase-like"/>
    <property type="match status" value="1"/>
</dbReference>
<dbReference type="PROSITE" id="PS00103">
    <property type="entry name" value="PUR_PYR_PR_TRANSFER"/>
    <property type="match status" value="1"/>
</dbReference>
<sequence length="179" mass="19308">MTFEDDLQASVRTIPDYPKPGVMFRDITTLLGDARAFRRAVDQLVHPWAGSKIDKVAGIEARGFILGGAVAHQVSAGFVPIRKKGKLPHQTVRMAYALEYGTDEMEMHVDAIARGERVILVDDLIATGGTAEGAVKLLRQIGADVVAACFIIDLPDLGGAAKLRAMDVPVRTLMAFEGH</sequence>
<reference key="1">
    <citation type="journal article" date="2006" name="Appl. Environ. Microbiol.">
        <title>Genome sequence of the chemolithoautotrophic nitrite-oxidizing bacterium Nitrobacter winogradskyi Nb-255.</title>
        <authorList>
            <person name="Starkenburg S.R."/>
            <person name="Chain P.S.G."/>
            <person name="Sayavedra-Soto L.A."/>
            <person name="Hauser L."/>
            <person name="Land M.L."/>
            <person name="Larimer F.W."/>
            <person name="Malfatti S.A."/>
            <person name="Klotz M.G."/>
            <person name="Bottomley P.J."/>
            <person name="Arp D.J."/>
            <person name="Hickey W.J."/>
        </authorList>
    </citation>
    <scope>NUCLEOTIDE SEQUENCE [LARGE SCALE GENOMIC DNA]</scope>
    <source>
        <strain>ATCC 25391 / DSM 10237 / CIP 104748 / NCIMB 11846 / Nb-255</strain>
    </source>
</reference>
<feature type="chain" id="PRO_1000000316" description="Adenine phosphoribosyltransferase">
    <location>
        <begin position="1"/>
        <end position="179"/>
    </location>
</feature>
<name>APT_NITWN</name>
<organism>
    <name type="scientific">Nitrobacter winogradskyi (strain ATCC 25391 / DSM 10237 / CIP 104748 / NCIMB 11846 / Nb-255)</name>
    <dbReference type="NCBI Taxonomy" id="323098"/>
    <lineage>
        <taxon>Bacteria</taxon>
        <taxon>Pseudomonadati</taxon>
        <taxon>Pseudomonadota</taxon>
        <taxon>Alphaproteobacteria</taxon>
        <taxon>Hyphomicrobiales</taxon>
        <taxon>Nitrobacteraceae</taxon>
        <taxon>Nitrobacter</taxon>
    </lineage>
</organism>
<evidence type="ECO:0000255" key="1">
    <source>
        <dbReference type="HAMAP-Rule" id="MF_00004"/>
    </source>
</evidence>
<gene>
    <name evidence="1" type="primary">apt</name>
    <name type="ordered locus">Nwi_2613</name>
</gene>
<accession>Q3SPC5</accession>
<proteinExistence type="inferred from homology"/>
<protein>
    <recommendedName>
        <fullName evidence="1">Adenine phosphoribosyltransferase</fullName>
        <shortName evidence="1">APRT</shortName>
        <ecNumber evidence="1">2.4.2.7</ecNumber>
    </recommendedName>
</protein>